<gene>
    <name evidence="1" type="primary">idi</name>
    <name type="ordered locus">RCAP_rcc00674</name>
</gene>
<reference key="1">
    <citation type="submission" date="1991-11" db="EMBL/GenBank/DDBJ databases">
        <authorList>
            <person name="Burke D.H."/>
            <person name="Alberti M."/>
            <person name="Armstrong G.A."/>
            <person name="Hearst J.E."/>
        </authorList>
    </citation>
    <scope>NUCLEOTIDE SEQUENCE [GENOMIC DNA]</scope>
    <source>
        <strain>ATCC BAA-309 / NBRC 16581 / SB1003</strain>
    </source>
</reference>
<reference key="2">
    <citation type="journal article" date="2010" name="J. Bacteriol.">
        <title>Complete genome sequence of the photosynthetic purple nonsulfur bacterium Rhodobacter capsulatus SB 1003.</title>
        <authorList>
            <person name="Strnad H."/>
            <person name="Lapidus A."/>
            <person name="Paces J."/>
            <person name="Ulbrich P."/>
            <person name="Vlcek C."/>
            <person name="Paces V."/>
            <person name="Haselkorn R."/>
        </authorList>
    </citation>
    <scope>NUCLEOTIDE SEQUENCE [LARGE SCALE GENOMIC DNA]</scope>
    <source>
        <strain>ATCC BAA-309 / NBRC 16581 / SB1003</strain>
    </source>
</reference>
<reference key="3">
    <citation type="journal article" date="1996" name="J. Bacteriol.">
        <title>Open reading frame 176 in the photosynthesis gene cluster of Rhodobacter capsulatus encodes idi, a gene for isopentenyl diphosphate isomerase.</title>
        <authorList>
            <person name="Hahn F.M."/>
            <person name="Baker J.A."/>
            <person name="Poulter C.D."/>
        </authorList>
    </citation>
    <scope>CHARACTERIZATION</scope>
</reference>
<accession>P26173</accession>
<accession>D5ANT5</accession>
<dbReference type="EC" id="5.3.3.2" evidence="1"/>
<dbReference type="EMBL" id="Z11165">
    <property type="protein sequence ID" value="CAA77535.1"/>
    <property type="molecule type" value="Genomic_DNA"/>
</dbReference>
<dbReference type="EMBL" id="CP001312">
    <property type="protein sequence ID" value="ADE84439.1"/>
    <property type="status" value="ALT_INIT"/>
    <property type="molecule type" value="Genomic_DNA"/>
</dbReference>
<dbReference type="PIR" id="S17819">
    <property type="entry name" value="S17819"/>
</dbReference>
<dbReference type="SMR" id="P26173"/>
<dbReference type="STRING" id="272942.RCAP_rcc00674"/>
<dbReference type="KEGG" id="rcp:RCAP_rcc00674"/>
<dbReference type="eggNOG" id="COG1443">
    <property type="taxonomic scope" value="Bacteria"/>
</dbReference>
<dbReference type="HOGENOM" id="CLU_060552_2_1_5"/>
<dbReference type="UniPathway" id="UPA00059">
    <property type="reaction ID" value="UER00104"/>
</dbReference>
<dbReference type="UniPathway" id="UPA00668"/>
<dbReference type="Proteomes" id="UP000002361">
    <property type="component" value="Chromosome"/>
</dbReference>
<dbReference type="GO" id="GO:0005737">
    <property type="term" value="C:cytoplasm"/>
    <property type="evidence" value="ECO:0007669"/>
    <property type="project" value="UniProtKB-SubCell"/>
</dbReference>
<dbReference type="GO" id="GO:0004452">
    <property type="term" value="F:isopentenyl-diphosphate delta-isomerase activity"/>
    <property type="evidence" value="ECO:0007669"/>
    <property type="project" value="UniProtKB-UniRule"/>
</dbReference>
<dbReference type="GO" id="GO:0046872">
    <property type="term" value="F:metal ion binding"/>
    <property type="evidence" value="ECO:0007669"/>
    <property type="project" value="UniProtKB-KW"/>
</dbReference>
<dbReference type="GO" id="GO:0015995">
    <property type="term" value="P:chlorophyll biosynthetic process"/>
    <property type="evidence" value="ECO:0007669"/>
    <property type="project" value="UniProtKB-UniRule"/>
</dbReference>
<dbReference type="GO" id="GO:0050992">
    <property type="term" value="P:dimethylallyl diphosphate biosynthetic process"/>
    <property type="evidence" value="ECO:0007669"/>
    <property type="project" value="UniProtKB-UniRule"/>
</dbReference>
<dbReference type="GO" id="GO:0009240">
    <property type="term" value="P:isopentenyl diphosphate biosynthetic process"/>
    <property type="evidence" value="ECO:0007669"/>
    <property type="project" value="TreeGrafter"/>
</dbReference>
<dbReference type="GO" id="GO:0015979">
    <property type="term" value="P:photosynthesis"/>
    <property type="evidence" value="ECO:0007669"/>
    <property type="project" value="UniProtKB-UniRule"/>
</dbReference>
<dbReference type="CDD" id="cd02885">
    <property type="entry name" value="NUDIX_IPP_Isomerase"/>
    <property type="match status" value="1"/>
</dbReference>
<dbReference type="Gene3D" id="3.90.79.10">
    <property type="entry name" value="Nucleoside Triphosphate Pyrophosphohydrolase"/>
    <property type="match status" value="1"/>
</dbReference>
<dbReference type="HAMAP" id="MF_00202">
    <property type="entry name" value="Idi"/>
    <property type="match status" value="1"/>
</dbReference>
<dbReference type="InterPro" id="IPR056375">
    <property type="entry name" value="Idi_bact"/>
</dbReference>
<dbReference type="InterPro" id="IPR011876">
    <property type="entry name" value="IsopentenylPP_isomerase_typ1"/>
</dbReference>
<dbReference type="InterPro" id="IPR015797">
    <property type="entry name" value="NUDIX_hydrolase-like_dom_sf"/>
</dbReference>
<dbReference type="InterPro" id="IPR000086">
    <property type="entry name" value="NUDIX_hydrolase_dom"/>
</dbReference>
<dbReference type="NCBIfam" id="TIGR02150">
    <property type="entry name" value="IPP_isom_1"/>
    <property type="match status" value="1"/>
</dbReference>
<dbReference type="NCBIfam" id="NF002995">
    <property type="entry name" value="PRK03759.1"/>
    <property type="match status" value="1"/>
</dbReference>
<dbReference type="PANTHER" id="PTHR10885">
    <property type="entry name" value="ISOPENTENYL-DIPHOSPHATE DELTA-ISOMERASE"/>
    <property type="match status" value="1"/>
</dbReference>
<dbReference type="PANTHER" id="PTHR10885:SF0">
    <property type="entry name" value="ISOPENTENYL-DIPHOSPHATE DELTA-ISOMERASE"/>
    <property type="match status" value="1"/>
</dbReference>
<dbReference type="Pfam" id="PF00293">
    <property type="entry name" value="NUDIX"/>
    <property type="match status" value="1"/>
</dbReference>
<dbReference type="PIRSF" id="PIRSF018427">
    <property type="entry name" value="Isopntndiph_ism"/>
    <property type="match status" value="1"/>
</dbReference>
<dbReference type="SUPFAM" id="SSF55811">
    <property type="entry name" value="Nudix"/>
    <property type="match status" value="1"/>
</dbReference>
<dbReference type="PROSITE" id="PS51462">
    <property type="entry name" value="NUDIX"/>
    <property type="match status" value="1"/>
</dbReference>
<name>IDI_RHOCB</name>
<feature type="chain" id="PRO_0000205260" description="Isopentenyl-diphosphate Delta-isomerase">
    <location>
        <begin position="1"/>
        <end position="176"/>
    </location>
</feature>
<feature type="domain" description="Nudix hydrolase">
    <location>
        <begin position="27"/>
        <end position="161"/>
    </location>
</feature>
<feature type="active site" evidence="1">
    <location>
        <position position="63"/>
    </location>
</feature>
<feature type="active site" evidence="1">
    <location>
        <position position="111"/>
    </location>
</feature>
<feature type="binding site" evidence="1">
    <location>
        <position position="23"/>
    </location>
    <ligand>
        <name>Mn(2+)</name>
        <dbReference type="ChEBI" id="CHEBI:29035"/>
    </ligand>
</feature>
<feature type="binding site" evidence="1">
    <location>
        <position position="29"/>
    </location>
    <ligand>
        <name>Mn(2+)</name>
        <dbReference type="ChEBI" id="CHEBI:29035"/>
    </ligand>
</feature>
<feature type="binding site" evidence="1">
    <location>
        <position position="63"/>
    </location>
    <ligand>
        <name>Mg(2+)</name>
        <dbReference type="ChEBI" id="CHEBI:18420"/>
    </ligand>
</feature>
<feature type="binding site" evidence="1">
    <location>
        <position position="65"/>
    </location>
    <ligand>
        <name>Mn(2+)</name>
        <dbReference type="ChEBI" id="CHEBI:29035"/>
    </ligand>
</feature>
<feature type="binding site" evidence="1">
    <location>
        <position position="83"/>
    </location>
    <ligand>
        <name>Mg(2+)</name>
        <dbReference type="ChEBI" id="CHEBI:18420"/>
    </ligand>
</feature>
<feature type="binding site" evidence="1">
    <location>
        <position position="109"/>
    </location>
    <ligand>
        <name>Mn(2+)</name>
        <dbReference type="ChEBI" id="CHEBI:29035"/>
    </ligand>
</feature>
<feature type="binding site" evidence="1">
    <location>
        <position position="111"/>
    </location>
    <ligand>
        <name>Mn(2+)</name>
        <dbReference type="ChEBI" id="CHEBI:29035"/>
    </ligand>
</feature>
<protein>
    <recommendedName>
        <fullName evidence="1">Isopentenyl-diphosphate Delta-isomerase</fullName>
        <shortName evidence="1">IPP isomerase</shortName>
        <ecNumber evidence="1">5.3.3.2</ecNumber>
    </recommendedName>
    <alternativeName>
        <fullName>Bacteriochlorophyll synthase 20 kDa chain</fullName>
    </alternativeName>
    <alternativeName>
        <fullName evidence="1">IPP:DMAPP isomerase</fullName>
    </alternativeName>
    <alternativeName>
        <fullName evidence="1">Isopentenyl pyrophosphate isomerase</fullName>
    </alternativeName>
</protein>
<proteinExistence type="evidence at protein level"/>
<comment type="function">
    <text evidence="1">Catalyzes the 1,3-allylic rearrangement of the homoallylic substrate isopentenyl (IPP) to its highly electrophilic allylic isomer, dimethylallyl diphosphate (DMAPP).</text>
</comment>
<comment type="catalytic activity">
    <reaction evidence="1">
        <text>isopentenyl diphosphate = dimethylallyl diphosphate</text>
        <dbReference type="Rhea" id="RHEA:23284"/>
        <dbReference type="ChEBI" id="CHEBI:57623"/>
        <dbReference type="ChEBI" id="CHEBI:128769"/>
        <dbReference type="EC" id="5.3.3.2"/>
    </reaction>
</comment>
<comment type="cofactor">
    <cofactor evidence="1">
        <name>Mg(2+)</name>
        <dbReference type="ChEBI" id="CHEBI:18420"/>
    </cofactor>
    <text evidence="1">Binds 1 Mg(2+) ion per subunit. The magnesium ion binds only when substrate is bound.</text>
</comment>
<comment type="cofactor">
    <cofactor evidence="1">
        <name>Mn(2+)</name>
        <dbReference type="ChEBI" id="CHEBI:29035"/>
    </cofactor>
    <text evidence="1">Binds 1 Mn(2+) ion per subunit.</text>
</comment>
<comment type="pathway">
    <text evidence="1">Isoprenoid biosynthesis; dimethylallyl diphosphate biosynthesis; dimethylallyl diphosphate from isopentenyl diphosphate: step 1/1.</text>
</comment>
<comment type="pathway">
    <text evidence="1">Porphyrin-containing compound metabolism; chlorophyll biosynthesis.</text>
</comment>
<comment type="subcellular location">
    <subcellularLocation>
        <location evidence="1">Cytoplasm</location>
    </subcellularLocation>
</comment>
<comment type="similarity">
    <text evidence="1">Belongs to the IPP isomerase type 1 family.</text>
</comment>
<comment type="sequence caution" evidence="2">
    <conflict type="erroneous initiation">
        <sequence resource="EMBL-CDS" id="ADE84439"/>
    </conflict>
    <text>Extended N-terminus.</text>
</comment>
<organism>
    <name type="scientific">Rhodobacter capsulatus (strain ATCC BAA-309 / NBRC 16581 / SB1003)</name>
    <dbReference type="NCBI Taxonomy" id="272942"/>
    <lineage>
        <taxon>Bacteria</taxon>
        <taxon>Pseudomonadati</taxon>
        <taxon>Pseudomonadota</taxon>
        <taxon>Alphaproteobacteria</taxon>
        <taxon>Rhodobacterales</taxon>
        <taxon>Rhodobacter group</taxon>
        <taxon>Rhodobacter</taxon>
    </lineage>
</organism>
<keyword id="KW-0149">Chlorophyll biosynthesis</keyword>
<keyword id="KW-0963">Cytoplasm</keyword>
<keyword id="KW-0413">Isomerase</keyword>
<keyword id="KW-0414">Isoprene biosynthesis</keyword>
<keyword id="KW-0460">Magnesium</keyword>
<keyword id="KW-0464">Manganese</keyword>
<keyword id="KW-0479">Metal-binding</keyword>
<keyword id="KW-0602">Photosynthesis</keyword>
<keyword id="KW-1185">Reference proteome</keyword>
<evidence type="ECO:0000255" key="1">
    <source>
        <dbReference type="HAMAP-Rule" id="MF_00202"/>
    </source>
</evidence>
<evidence type="ECO:0000305" key="2"/>
<sequence>MAEEMIPAWVEGVLQPVEKLEAHRKGLRHLAISVFVTRGNKVLLQQRALSKYHTPGLWANTCCTHPYWGEDAPTCAARRLGQELGIVGLKLRHMGQLEYRADVNNGMIEHEVVEVFTAEAPEGIEPQPDPEEVADTEWVRIDALRSEIHANPERFTPWLKIYIEQHRDMIFPPVTA</sequence>